<reference key="1">
    <citation type="journal article" date="2005" name="Mol. Phylogenet. Evol.">
        <title>Multigene phylogeny of the Old World mice, Murinae, reveals distinct geographic lineages and the declining utility of mitochondrial genes compared to nuclear genes.</title>
        <authorList>
            <person name="Steppan S.J."/>
            <person name="Adkins R.M."/>
            <person name="Spinks P.Q."/>
            <person name="Hale C."/>
        </authorList>
    </citation>
    <scope>NUCLEOTIDE SEQUENCE [GENOMIC DNA]</scope>
</reference>
<proteinExistence type="inferred from homology"/>
<gene>
    <name type="primary">MT-CO2</name>
    <name type="synonym">COII</name>
    <name type="synonym">COX2</name>
    <name type="synonym">COXII</name>
    <name type="synonym">MTCO2</name>
</gene>
<accession>Q38RW8</accession>
<geneLocation type="mitochondrion"/>
<organism>
    <name type="scientific">Praomys taitae</name>
    <name type="common">Taita hill rat</name>
    <dbReference type="NCBI Taxonomy" id="243070"/>
    <lineage>
        <taxon>Eukaryota</taxon>
        <taxon>Metazoa</taxon>
        <taxon>Chordata</taxon>
        <taxon>Craniata</taxon>
        <taxon>Vertebrata</taxon>
        <taxon>Euteleostomi</taxon>
        <taxon>Mammalia</taxon>
        <taxon>Eutheria</taxon>
        <taxon>Euarchontoglires</taxon>
        <taxon>Glires</taxon>
        <taxon>Rodentia</taxon>
        <taxon>Myomorpha</taxon>
        <taxon>Muroidea</taxon>
        <taxon>Muridae</taxon>
        <taxon>Murinae</taxon>
        <taxon>Praomys</taxon>
    </lineage>
</organism>
<sequence length="227" mass="25931">MAYPFQLGLQDATSPIMEELTNFHDHTLMIVFLISSLVLYIISLMLTTKLTHTSTMDAQEVETIWTILPAVILILIALPSLRILYMMDEINNPVLTVKTMGHQWYWSYEYTDYKDLCFDSYMVPTNELKPGELRLLEVDNRVVLPMELPIRMLISSEDVLHSWAVPSLGLKTDAIPGRLNQATVTSNRPGLFYGQCSEICGSNHSFMPIVLEMVPLKHFENWSTSMI</sequence>
<protein>
    <recommendedName>
        <fullName>Cytochrome c oxidase subunit 2</fullName>
        <ecNumber>7.1.1.9</ecNumber>
    </recommendedName>
    <alternativeName>
        <fullName>Cytochrome c oxidase polypeptide II</fullName>
    </alternativeName>
</protein>
<name>COX2_PRATA</name>
<feature type="chain" id="PRO_0000254937" description="Cytochrome c oxidase subunit 2">
    <location>
        <begin position="1"/>
        <end position="227"/>
    </location>
</feature>
<feature type="topological domain" description="Mitochondrial intermembrane" evidence="3">
    <location>
        <begin position="1"/>
        <end position="14"/>
    </location>
</feature>
<feature type="transmembrane region" description="Helical; Name=I" evidence="3">
    <location>
        <begin position="15"/>
        <end position="45"/>
    </location>
</feature>
<feature type="topological domain" description="Mitochondrial matrix" evidence="3">
    <location>
        <begin position="46"/>
        <end position="59"/>
    </location>
</feature>
<feature type="transmembrane region" description="Helical; Name=II" evidence="3">
    <location>
        <begin position="60"/>
        <end position="87"/>
    </location>
</feature>
<feature type="topological domain" description="Mitochondrial intermembrane" evidence="3">
    <location>
        <begin position="88"/>
        <end position="227"/>
    </location>
</feature>
<feature type="binding site" evidence="3">
    <location>
        <position position="161"/>
    </location>
    <ligand>
        <name>Cu cation</name>
        <dbReference type="ChEBI" id="CHEBI:23378"/>
        <label>A1</label>
    </ligand>
</feature>
<feature type="binding site" evidence="3">
    <location>
        <position position="196"/>
    </location>
    <ligand>
        <name>Cu cation</name>
        <dbReference type="ChEBI" id="CHEBI:23378"/>
        <label>A1</label>
    </ligand>
</feature>
<feature type="binding site" evidence="3">
    <location>
        <position position="196"/>
    </location>
    <ligand>
        <name>Cu cation</name>
        <dbReference type="ChEBI" id="CHEBI:23378"/>
        <label>A2</label>
    </ligand>
</feature>
<feature type="binding site" evidence="3">
    <location>
        <position position="198"/>
    </location>
    <ligand>
        <name>Cu cation</name>
        <dbReference type="ChEBI" id="CHEBI:23378"/>
        <label>A2</label>
    </ligand>
</feature>
<feature type="binding site" evidence="3">
    <location>
        <position position="198"/>
    </location>
    <ligand>
        <name>Mg(2+)</name>
        <dbReference type="ChEBI" id="CHEBI:18420"/>
        <note>ligand shared with MT-CO1</note>
    </ligand>
</feature>
<feature type="binding site" evidence="3">
    <location>
        <position position="200"/>
    </location>
    <ligand>
        <name>Cu cation</name>
        <dbReference type="ChEBI" id="CHEBI:23378"/>
        <label>A1</label>
    </ligand>
</feature>
<feature type="binding site" evidence="3">
    <location>
        <position position="200"/>
    </location>
    <ligand>
        <name>Cu cation</name>
        <dbReference type="ChEBI" id="CHEBI:23378"/>
        <label>A2</label>
    </ligand>
</feature>
<feature type="binding site" evidence="3">
    <location>
        <position position="204"/>
    </location>
    <ligand>
        <name>Cu cation</name>
        <dbReference type="ChEBI" id="CHEBI:23378"/>
        <label>A2</label>
    </ligand>
</feature>
<feature type="binding site" evidence="3">
    <location>
        <position position="207"/>
    </location>
    <ligand>
        <name>Cu cation</name>
        <dbReference type="ChEBI" id="CHEBI:23378"/>
        <label>A1</label>
    </ligand>
</feature>
<comment type="function">
    <text evidence="2">Component of the cytochrome c oxidase, the last enzyme in the mitochondrial electron transport chain which drives oxidative phosphorylation. The respiratory chain contains 3 multisubunit complexes succinate dehydrogenase (complex II, CII), ubiquinol-cytochrome c oxidoreductase (cytochrome b-c1 complex, complex III, CIII) and cytochrome c oxidase (complex IV, CIV), that cooperate to transfer electrons derived from NADH and succinate to molecular oxygen, creating an electrochemical gradient over the inner membrane that drives transmembrane transport and the ATP synthase. Cytochrome c oxidase is the component of the respiratory chain that catalyzes the reduction of oxygen to water. Electrons originating from reduced cytochrome c in the intermembrane space (IMS) are transferred via the dinuclear copper A center (CU(A)) of subunit 2 and heme A of subunit 1 to the active site in subunit 1, a binuclear center (BNC) formed by heme A3 and copper B (CU(B)). The BNC reduces molecular oxygen to 2 water molecules using 4 electrons from cytochrome c in the IMS and 4 protons from the mitochondrial matrix.</text>
</comment>
<comment type="catalytic activity">
    <reaction evidence="2">
        <text>4 Fe(II)-[cytochrome c] + O2 + 8 H(+)(in) = 4 Fe(III)-[cytochrome c] + 2 H2O + 4 H(+)(out)</text>
        <dbReference type="Rhea" id="RHEA:11436"/>
        <dbReference type="Rhea" id="RHEA-COMP:10350"/>
        <dbReference type="Rhea" id="RHEA-COMP:14399"/>
        <dbReference type="ChEBI" id="CHEBI:15377"/>
        <dbReference type="ChEBI" id="CHEBI:15378"/>
        <dbReference type="ChEBI" id="CHEBI:15379"/>
        <dbReference type="ChEBI" id="CHEBI:29033"/>
        <dbReference type="ChEBI" id="CHEBI:29034"/>
        <dbReference type="EC" id="7.1.1.9"/>
    </reaction>
    <physiologicalReaction direction="left-to-right" evidence="2">
        <dbReference type="Rhea" id="RHEA:11437"/>
    </physiologicalReaction>
</comment>
<comment type="cofactor">
    <cofactor evidence="3">
        <name>Cu cation</name>
        <dbReference type="ChEBI" id="CHEBI:23378"/>
    </cofactor>
    <text evidence="3">Binds a dinuclear copper A center per subunit.</text>
</comment>
<comment type="subunit">
    <text evidence="1 3">Component of the cytochrome c oxidase (complex IV, CIV), a multisubunit enzyme composed of 14 subunits. The complex is composed of a catalytic core of 3 subunits MT-CO1, MT-CO2 and MT-CO3, encoded in the mitochondrial DNA, and 11 supernumerary subunits COX4I, COX5A, COX5B, COX6A, COX6B, COX6C, COX7A, COX7B, COX7C, COX8 and NDUFA4, which are encoded in the nuclear genome. The complex exists as a monomer or a dimer and forms supercomplexes (SCs) in the inner mitochondrial membrane with NADH-ubiquinone oxidoreductase (complex I, CI) and ubiquinol-cytochrome c oxidoreductase (cytochrome b-c1 complex, complex III, CIII), resulting in different assemblies (supercomplex SCI(1)III(2)IV(1) and megacomplex MCI(2)III(2)IV(2)) (By similarity). Found in a complex with TMEM177, COA6, COX18, COX20, SCO1 and SCO2. Interacts with TMEM177 in a COX20-dependent manner. Interacts with COX20. Interacts with COX16 (By similarity).</text>
</comment>
<comment type="subcellular location">
    <subcellularLocation>
        <location evidence="3">Mitochondrion inner membrane</location>
        <topology evidence="3">Multi-pass membrane protein</topology>
    </subcellularLocation>
</comment>
<comment type="similarity">
    <text evidence="4">Belongs to the cytochrome c oxidase subunit 2 family.</text>
</comment>
<dbReference type="EC" id="7.1.1.9"/>
<dbReference type="EMBL" id="DQ019114">
    <property type="protein sequence ID" value="ABA28432.1"/>
    <property type="molecule type" value="Genomic_DNA"/>
</dbReference>
<dbReference type="SMR" id="Q38RW8"/>
<dbReference type="GO" id="GO:0005743">
    <property type="term" value="C:mitochondrial inner membrane"/>
    <property type="evidence" value="ECO:0007669"/>
    <property type="project" value="UniProtKB-SubCell"/>
</dbReference>
<dbReference type="GO" id="GO:0045277">
    <property type="term" value="C:respiratory chain complex IV"/>
    <property type="evidence" value="ECO:0000250"/>
    <property type="project" value="UniProtKB"/>
</dbReference>
<dbReference type="GO" id="GO:0005507">
    <property type="term" value="F:copper ion binding"/>
    <property type="evidence" value="ECO:0007669"/>
    <property type="project" value="InterPro"/>
</dbReference>
<dbReference type="GO" id="GO:0004129">
    <property type="term" value="F:cytochrome-c oxidase activity"/>
    <property type="evidence" value="ECO:0007669"/>
    <property type="project" value="UniProtKB-EC"/>
</dbReference>
<dbReference type="GO" id="GO:0042773">
    <property type="term" value="P:ATP synthesis coupled electron transport"/>
    <property type="evidence" value="ECO:0007669"/>
    <property type="project" value="TreeGrafter"/>
</dbReference>
<dbReference type="CDD" id="cd13912">
    <property type="entry name" value="CcO_II_C"/>
    <property type="match status" value="1"/>
</dbReference>
<dbReference type="FunFam" id="1.10.287.90:FF:000001">
    <property type="entry name" value="Cytochrome c oxidase subunit 2"/>
    <property type="match status" value="1"/>
</dbReference>
<dbReference type="FunFam" id="2.60.40.420:FF:000001">
    <property type="entry name" value="Cytochrome c oxidase subunit 2"/>
    <property type="match status" value="1"/>
</dbReference>
<dbReference type="Gene3D" id="1.10.287.90">
    <property type="match status" value="1"/>
</dbReference>
<dbReference type="Gene3D" id="2.60.40.420">
    <property type="entry name" value="Cupredoxins - blue copper proteins"/>
    <property type="match status" value="1"/>
</dbReference>
<dbReference type="InterPro" id="IPR045187">
    <property type="entry name" value="CcO_II"/>
</dbReference>
<dbReference type="InterPro" id="IPR002429">
    <property type="entry name" value="CcO_II-like_C"/>
</dbReference>
<dbReference type="InterPro" id="IPR034210">
    <property type="entry name" value="CcO_II_C"/>
</dbReference>
<dbReference type="InterPro" id="IPR001505">
    <property type="entry name" value="Copper_CuA"/>
</dbReference>
<dbReference type="InterPro" id="IPR008972">
    <property type="entry name" value="Cupredoxin"/>
</dbReference>
<dbReference type="InterPro" id="IPR014222">
    <property type="entry name" value="Cyt_c_oxidase_su2"/>
</dbReference>
<dbReference type="InterPro" id="IPR011759">
    <property type="entry name" value="Cyt_c_oxidase_su2_TM_dom"/>
</dbReference>
<dbReference type="InterPro" id="IPR036257">
    <property type="entry name" value="Cyt_c_oxidase_su2_TM_sf"/>
</dbReference>
<dbReference type="NCBIfam" id="TIGR02866">
    <property type="entry name" value="CoxB"/>
    <property type="match status" value="1"/>
</dbReference>
<dbReference type="PANTHER" id="PTHR22888:SF9">
    <property type="entry name" value="CYTOCHROME C OXIDASE SUBUNIT 2"/>
    <property type="match status" value="1"/>
</dbReference>
<dbReference type="PANTHER" id="PTHR22888">
    <property type="entry name" value="CYTOCHROME C OXIDASE, SUBUNIT II"/>
    <property type="match status" value="1"/>
</dbReference>
<dbReference type="Pfam" id="PF00116">
    <property type="entry name" value="COX2"/>
    <property type="match status" value="1"/>
</dbReference>
<dbReference type="Pfam" id="PF02790">
    <property type="entry name" value="COX2_TM"/>
    <property type="match status" value="1"/>
</dbReference>
<dbReference type="PRINTS" id="PR01166">
    <property type="entry name" value="CYCOXIDASEII"/>
</dbReference>
<dbReference type="SUPFAM" id="SSF49503">
    <property type="entry name" value="Cupredoxins"/>
    <property type="match status" value="1"/>
</dbReference>
<dbReference type="SUPFAM" id="SSF81464">
    <property type="entry name" value="Cytochrome c oxidase subunit II-like, transmembrane region"/>
    <property type="match status" value="1"/>
</dbReference>
<dbReference type="PROSITE" id="PS00078">
    <property type="entry name" value="COX2"/>
    <property type="match status" value="1"/>
</dbReference>
<dbReference type="PROSITE" id="PS50857">
    <property type="entry name" value="COX2_CUA"/>
    <property type="match status" value="1"/>
</dbReference>
<dbReference type="PROSITE" id="PS50999">
    <property type="entry name" value="COX2_TM"/>
    <property type="match status" value="1"/>
</dbReference>
<keyword id="KW-0186">Copper</keyword>
<keyword id="KW-0249">Electron transport</keyword>
<keyword id="KW-0460">Magnesium</keyword>
<keyword id="KW-0472">Membrane</keyword>
<keyword id="KW-0479">Metal-binding</keyword>
<keyword id="KW-0496">Mitochondrion</keyword>
<keyword id="KW-0999">Mitochondrion inner membrane</keyword>
<keyword id="KW-0679">Respiratory chain</keyword>
<keyword id="KW-1278">Translocase</keyword>
<keyword id="KW-0812">Transmembrane</keyword>
<keyword id="KW-1133">Transmembrane helix</keyword>
<keyword id="KW-0813">Transport</keyword>
<evidence type="ECO:0000250" key="1">
    <source>
        <dbReference type="UniProtKB" id="P00403"/>
    </source>
</evidence>
<evidence type="ECO:0000250" key="2">
    <source>
        <dbReference type="UniProtKB" id="P00410"/>
    </source>
</evidence>
<evidence type="ECO:0000250" key="3">
    <source>
        <dbReference type="UniProtKB" id="P68530"/>
    </source>
</evidence>
<evidence type="ECO:0000305" key="4"/>